<comment type="function">
    <text evidence="1">Involved in viral genome packaging through its interaction with packaging proteins 1 and 2. After proteolytic cleavage by adenovirus protease, L1 52/55k protein is removed from the capsid during viral maturation.</text>
</comment>
<comment type="subunit">
    <text evidence="1">Part of the genome packaging complex composed of packaging proteins 1, 2 and 3; this complex specifically binds to the packaging sequence on the left end of viral genomic DNA and performs packaging of the viral genome. Interacts with hexon-linking protein IIIa; this interaction is required to promote correct genome packaging.</text>
</comment>
<comment type="subcellular location">
    <subcellularLocation>
        <location evidence="1">Host nucleus</location>
    </subcellularLocation>
    <text evidence="1">Nuclear protein present in empty capsids and assembly intermediates.</text>
</comment>
<comment type="induction">
    <text evidence="1">Expressed in the early phase and late phase of the viral replicative cycle.</text>
</comment>
<comment type="PTM">
    <text evidence="1">Cleaved at different sites by the viral protease during virion maturation.</text>
</comment>
<comment type="miscellaneous">
    <text evidence="1">All late proteins expressed from the major late promoter are produced by alternative splicing and alternative polyadenylation of the same gene giving rise to non-overlapping ORFs. A leader sequence is present in the N-terminus of all these mRNAs and is recognized by the viral shutoff protein to provide expression although conventional translation via ribosome scanning from the cap has been shut off in the host cell.</text>
</comment>
<comment type="similarity">
    <text evidence="1">Belongs to the adenoviridae packaging protein 3 family.</text>
</comment>
<reference key="1">
    <citation type="submission" date="1996-08" db="EMBL/GenBank/DDBJ databases">
        <title>DNA sequence and genomic organization of canine adenovirus type 1.</title>
        <authorList>
            <person name="Campbell J.B."/>
            <person name="Zhao Y."/>
        </authorList>
    </citation>
    <scope>NUCLEOTIDE SEQUENCE [LARGE SCALE GENOMIC DNA]</scope>
</reference>
<sequence>MHPVLRQMKPLPASVVKLEAESEGLARLQGGAAPEVHPRVQMKQEAAEAYIPASNVFRDNEGEEAEGLRHLKYESGRMLRKDHPSKRVLDERDFEKSPENGISAAEAHLKSADLVTAYEHTVKAEVNFQTTFNNNVRTLIAREEVVIGLMHLWDFVEAFLENPVSKALTAQLFLIVQHCRDEGVLRESLLNIAEPESRWLVDLLNLLQTIVVQERSLAVGEKVAAINYSVITLSKHYARKIFNSVFVPIDKEAKINTFYMRTVVQILVLSDDLGMYRNERIERAVSGARQRELNDRELMYRLREALTSNGLSEIEGGEDSARVRSKENWGAGAGVGAASARYPHLLDYEEKENPDGSVSFQQHERGTQSHENGGHAEPAYSRRQLGRFY</sequence>
<organism>
    <name type="scientific">Canine adenovirus serotype 1 (strain CLL)</name>
    <name type="common">CAdV-1</name>
    <name type="synonym">Canine adenovirus 1 (strain CLL)</name>
    <dbReference type="NCBI Taxonomy" id="69150"/>
    <lineage>
        <taxon>Viruses</taxon>
        <taxon>Varidnaviria</taxon>
        <taxon>Bamfordvirae</taxon>
        <taxon>Preplasmiviricota</taxon>
        <taxon>Tectiliviricetes</taxon>
        <taxon>Rowavirales</taxon>
        <taxon>Adenoviridae</taxon>
        <taxon>Mastadenovirus</taxon>
        <taxon>Canine mastadenovirus A</taxon>
    </lineage>
</organism>
<dbReference type="EMBL" id="U55001">
    <property type="protein sequence ID" value="AAB05436.1"/>
    <property type="molecule type" value="Genomic_DNA"/>
</dbReference>
<dbReference type="RefSeq" id="AP_000052.1">
    <property type="nucleotide sequence ID" value="AC_000003.1"/>
</dbReference>
<dbReference type="SMR" id="P68972"/>
<dbReference type="GO" id="GO:0042025">
    <property type="term" value="C:host cell nucleus"/>
    <property type="evidence" value="ECO:0007669"/>
    <property type="project" value="UniProtKB-SubCell"/>
</dbReference>
<dbReference type="GO" id="GO:0019073">
    <property type="term" value="P:viral DNA genome packaging"/>
    <property type="evidence" value="ECO:0007669"/>
    <property type="project" value="UniProtKB-UniRule"/>
</dbReference>
<dbReference type="GO" id="GO:0019076">
    <property type="term" value="P:viral release from host cell"/>
    <property type="evidence" value="ECO:0007669"/>
    <property type="project" value="UniProtKB-UniRule"/>
</dbReference>
<dbReference type="HAMAP" id="MF_04058">
    <property type="entry name" value="ADV_PKG3"/>
    <property type="match status" value="1"/>
</dbReference>
<dbReference type="InterPro" id="IPR037536">
    <property type="entry name" value="ADV_PKG3"/>
</dbReference>
<dbReference type="InterPro" id="IPR004292">
    <property type="entry name" value="L1-like"/>
</dbReference>
<dbReference type="Pfam" id="PF03052">
    <property type="entry name" value="Adeno_52K"/>
    <property type="match status" value="1"/>
</dbReference>
<keyword id="KW-1048">Host nucleus</keyword>
<keyword id="KW-0426">Late protein</keyword>
<keyword id="KW-0597">Phosphoprotein</keyword>
<keyword id="KW-0231">Viral genome packaging</keyword>
<keyword id="KW-1188">Viral release from host cell</keyword>
<gene>
    <name evidence="1" type="primary">L1</name>
</gene>
<organismHost>
    <name type="scientific">Canis lupus familiaris</name>
    <name type="common">Dog</name>
    <name type="synonym">Canis familiaris</name>
    <dbReference type="NCBI Taxonomy" id="9615"/>
</organismHost>
<proteinExistence type="inferred from homology"/>
<feature type="chain" id="PRO_0000221869" description="Packaging protein 3">
    <location>
        <begin position="1"/>
        <end position="389"/>
    </location>
</feature>
<feature type="region of interest" description="Interaction with packaging protein 1" evidence="1">
    <location>
        <begin position="1"/>
        <end position="131"/>
    </location>
</feature>
<feature type="region of interest" description="Disordered" evidence="2">
    <location>
        <begin position="350"/>
        <end position="389"/>
    </location>
</feature>
<feature type="compositionally biased region" description="Basic and acidic residues" evidence="2">
    <location>
        <begin position="362"/>
        <end position="374"/>
    </location>
</feature>
<accession>P68972</accession>
<accession>Q65948</accession>
<accession>Q96683</accession>
<name>PKG3_ADECC</name>
<protein>
    <recommendedName>
        <fullName evidence="1">Packaging protein 3</fullName>
    </recommendedName>
    <alternativeName>
        <fullName evidence="1">L1-52/55 kDa protein</fullName>
    </alternativeName>
    <alternativeName>
        <fullName evidence="1">Packaging protein 52K</fullName>
    </alternativeName>
</protein>
<evidence type="ECO:0000255" key="1">
    <source>
        <dbReference type="HAMAP-Rule" id="MF_04058"/>
    </source>
</evidence>
<evidence type="ECO:0000256" key="2">
    <source>
        <dbReference type="SAM" id="MobiDB-lite"/>
    </source>
</evidence>